<gene>
    <name type="ordered locus">SAOUHSC_01411</name>
</gene>
<proteinExistence type="inferred from homology"/>
<feature type="chain" id="PRO_0000294018" description="Putative branched-chain amino acid carrier protein SAOUHSC_01411">
    <location>
        <begin position="1"/>
        <end position="447"/>
    </location>
</feature>
<feature type="transmembrane region" description="Helical" evidence="1">
    <location>
        <begin position="6"/>
        <end position="26"/>
    </location>
</feature>
<feature type="transmembrane region" description="Helical" evidence="1">
    <location>
        <begin position="40"/>
        <end position="60"/>
    </location>
</feature>
<feature type="transmembrane region" description="Helical" evidence="1">
    <location>
        <begin position="74"/>
        <end position="94"/>
    </location>
</feature>
<feature type="transmembrane region" description="Helical" evidence="1">
    <location>
        <begin position="114"/>
        <end position="134"/>
    </location>
</feature>
<feature type="transmembrane region" description="Helical" evidence="1">
    <location>
        <begin position="143"/>
        <end position="163"/>
    </location>
</feature>
<feature type="transmembrane region" description="Helical" evidence="1">
    <location>
        <begin position="193"/>
        <end position="213"/>
    </location>
</feature>
<feature type="transmembrane region" description="Helical" evidence="1">
    <location>
        <begin position="229"/>
        <end position="249"/>
    </location>
</feature>
<feature type="transmembrane region" description="Helical" evidence="1">
    <location>
        <begin position="290"/>
        <end position="310"/>
    </location>
</feature>
<feature type="transmembrane region" description="Helical" evidence="1">
    <location>
        <begin position="326"/>
        <end position="346"/>
    </location>
</feature>
<feature type="transmembrane region" description="Helical" evidence="1">
    <location>
        <begin position="350"/>
        <end position="370"/>
    </location>
</feature>
<feature type="transmembrane region" description="Helical" evidence="1">
    <location>
        <begin position="382"/>
        <end position="402"/>
    </location>
</feature>
<feature type="transmembrane region" description="Helical" evidence="1">
    <location>
        <begin position="417"/>
        <end position="437"/>
    </location>
</feature>
<feature type="sequence conflict" description="In Ref. 1; AAC38146." evidence="2" ref="1">
    <original>N</original>
    <variation>I</variation>
    <location>
        <position position="27"/>
    </location>
</feature>
<feature type="sequence conflict" description="In Ref. 1; AAC38146." evidence="2" ref="1">
    <original>SGQF</original>
    <variation>IGSI</variation>
    <location>
        <begin position="32"/>
        <end position="35"/>
    </location>
</feature>
<feature type="sequence conflict" description="In Ref. 1; AAC38146." evidence="2" ref="1">
    <original>S</original>
    <variation>T</variation>
    <location>
        <position position="167"/>
    </location>
</feature>
<feature type="sequence conflict" description="In Ref. 1; AAC38146." evidence="2" ref="1">
    <original>I</original>
    <variation>M</variation>
    <location>
        <position position="200"/>
    </location>
</feature>
<feature type="sequence conflict" description="In Ref. 1; AAC38146." evidence="2" ref="1">
    <original>I</original>
    <variation>D</variation>
    <location>
        <position position="208"/>
    </location>
</feature>
<feature type="sequence conflict" description="In Ref. 1; AAC38146." evidence="2" ref="1">
    <original>A</original>
    <variation>R</variation>
    <location>
        <position position="298"/>
    </location>
</feature>
<feature type="sequence conflict" description="In Ref. 1; AAC38146." evidence="2" ref="1">
    <original>R</original>
    <variation>K</variation>
    <location>
        <position position="316"/>
    </location>
</feature>
<feature type="sequence conflict" description="In Ref. 1; AAC38146." evidence="2" ref="1">
    <original>Y</original>
    <variation>C</variation>
    <location>
        <position position="415"/>
    </location>
</feature>
<accession>Q2FYM4</accession>
<accession>O34007</accession>
<comment type="function">
    <text evidence="2">Component of the transport system for branched-chain amino acids (leucine, isoleucine and valine), which is coupled to a proton motive force (Potential). Contributes to NaCl tolerance.</text>
</comment>
<comment type="subcellular location">
    <subcellularLocation>
        <location evidence="2">Cell membrane</location>
        <topology evidence="2">Multi-pass membrane protein</topology>
    </subcellularLocation>
</comment>
<comment type="miscellaneous">
    <text>In Caenorhabditis elegans-killing model mutant strain is attenuated in virulence.</text>
</comment>
<comment type="similarity">
    <text evidence="2">Belongs to the branched chain amino acid transporter family.</text>
</comment>
<comment type="sequence caution" evidence="2">
    <conflict type="frameshift">
        <sequence resource="EMBL-CDS" id="AAC38146"/>
    </conflict>
</comment>
<dbReference type="EMBL" id="U87144">
    <property type="protein sequence ID" value="AAC38146.1"/>
    <property type="status" value="ALT_FRAME"/>
    <property type="molecule type" value="Genomic_DNA"/>
</dbReference>
<dbReference type="EMBL" id="CP000253">
    <property type="protein sequence ID" value="ABD30505.1"/>
    <property type="molecule type" value="Genomic_DNA"/>
</dbReference>
<dbReference type="RefSeq" id="YP_499938.1">
    <property type="nucleotide sequence ID" value="NC_007795.1"/>
</dbReference>
<dbReference type="STRING" id="93061.SAOUHSC_01411"/>
<dbReference type="PaxDb" id="1280-SAXN108_1426"/>
<dbReference type="GeneID" id="3920643"/>
<dbReference type="KEGG" id="sao:SAOUHSC_01411"/>
<dbReference type="PATRIC" id="fig|93061.5.peg.1291"/>
<dbReference type="eggNOG" id="COG1114">
    <property type="taxonomic scope" value="Bacteria"/>
</dbReference>
<dbReference type="HOGENOM" id="CLU_036807_0_1_9"/>
<dbReference type="OrthoDB" id="9783920at2"/>
<dbReference type="PRO" id="PR:Q2FYM4"/>
<dbReference type="Proteomes" id="UP000008816">
    <property type="component" value="Chromosome"/>
</dbReference>
<dbReference type="GO" id="GO:0005886">
    <property type="term" value="C:plasma membrane"/>
    <property type="evidence" value="ECO:0000318"/>
    <property type="project" value="GO_Central"/>
</dbReference>
<dbReference type="GO" id="GO:0015188">
    <property type="term" value="F:L-isoleucine transmembrane transporter activity"/>
    <property type="evidence" value="ECO:0000318"/>
    <property type="project" value="GO_Central"/>
</dbReference>
<dbReference type="GO" id="GO:0015190">
    <property type="term" value="F:L-leucine transmembrane transporter activity"/>
    <property type="evidence" value="ECO:0000318"/>
    <property type="project" value="GO_Central"/>
</dbReference>
<dbReference type="GO" id="GO:0005304">
    <property type="term" value="F:L-valine transmembrane transporter activity"/>
    <property type="evidence" value="ECO:0000318"/>
    <property type="project" value="GO_Central"/>
</dbReference>
<dbReference type="GO" id="GO:0015818">
    <property type="term" value="P:isoleucine transport"/>
    <property type="evidence" value="ECO:0000318"/>
    <property type="project" value="GO_Central"/>
</dbReference>
<dbReference type="GO" id="GO:0015820">
    <property type="term" value="P:L-leucine transport"/>
    <property type="evidence" value="ECO:0000318"/>
    <property type="project" value="GO_Central"/>
</dbReference>
<dbReference type="GO" id="GO:0015829">
    <property type="term" value="P:valine transport"/>
    <property type="evidence" value="ECO:0000318"/>
    <property type="project" value="GO_Central"/>
</dbReference>
<dbReference type="FunFam" id="1.20.1740.10:FF:000068">
    <property type="entry name" value="Branched-chain amino acid transport system carrier protein"/>
    <property type="match status" value="1"/>
</dbReference>
<dbReference type="Gene3D" id="1.20.1740.10">
    <property type="entry name" value="Amino acid/polyamine transporter I"/>
    <property type="match status" value="1"/>
</dbReference>
<dbReference type="InterPro" id="IPR004685">
    <property type="entry name" value="Brnchd-chn_aa_trnsp_Livcs"/>
</dbReference>
<dbReference type="NCBIfam" id="TIGR00796">
    <property type="entry name" value="livcs"/>
    <property type="match status" value="1"/>
</dbReference>
<dbReference type="PANTHER" id="PTHR30588:SF7">
    <property type="entry name" value="BRANCHED-CHAIN AMINO ACID CARRIER PROTEIN SAOUHSC_01411-RELATED"/>
    <property type="match status" value="1"/>
</dbReference>
<dbReference type="PANTHER" id="PTHR30588">
    <property type="entry name" value="BRANCHED-CHAIN AMINO ACID TRANSPORT SYSTEM 2 CARRIER PROTEIN"/>
    <property type="match status" value="1"/>
</dbReference>
<dbReference type="Pfam" id="PF05525">
    <property type="entry name" value="Branch_AA_trans"/>
    <property type="match status" value="1"/>
</dbReference>
<protein>
    <recommendedName>
        <fullName>Putative branched-chain amino acid carrier protein SAOUHSC_01411</fullName>
    </recommendedName>
</protein>
<keyword id="KW-0029">Amino-acid transport</keyword>
<keyword id="KW-1003">Cell membrane</keyword>
<keyword id="KW-0472">Membrane</keyword>
<keyword id="KW-1185">Reference proteome</keyword>
<keyword id="KW-0812">Transmembrane</keyword>
<keyword id="KW-1133">Transmembrane helix</keyword>
<keyword id="KW-0813">Transport</keyword>
<name>BRNQL_STAA8</name>
<sequence length="447" mass="48815">MNKNTWVIGFTLFAMFFGAGNLIFPPNLGLDSGQFFWPAILAFVLTGIGLPLLGVIVGALDKEGYIGALNKISPKFSILFLIIIYLTIGPLFAIPRTASTSFEMTITPIIHSNSSIALFIFTIIYFIVVLYICLNPSKLIDRIGSLLTPLLLITILAMIIKGYLDFSGNSAGKGNEALYHSNFSSFAEGFTQGYLTMDAIAAIAFSMIVVNAVKLTGITKTNQIFKQTLTAGLIAAVALIFIYISLGYIGNHMPVSDMTLDQLKSKDRNIGTYLLTTMASTGFGSFGKYLLGIIVALACLTTACGLIVAVSEYFHRIVPKVSYKAFVLVFILMSFIIANQGLNAVISMSIPVLSIVYPVAITVVLLILIAKFIPTKRISQQIPVIIVFILSIFSVISKLGWLKINFIESLPLRAYSLEWFPVAIIATILGYLVGIFVKQDPIKYQQE</sequence>
<organism>
    <name type="scientific">Staphylococcus aureus (strain NCTC 8325 / PS 47)</name>
    <dbReference type="NCBI Taxonomy" id="93061"/>
    <lineage>
        <taxon>Bacteria</taxon>
        <taxon>Bacillati</taxon>
        <taxon>Bacillota</taxon>
        <taxon>Bacilli</taxon>
        <taxon>Bacillales</taxon>
        <taxon>Staphylococcaceae</taxon>
        <taxon>Staphylococcus</taxon>
    </lineage>
</organism>
<evidence type="ECO:0000255" key="1"/>
<evidence type="ECO:0000305" key="2"/>
<reference key="1">
    <citation type="journal article" date="1998" name="Appl. Environ. Microbiol.">
        <title>Cloning and nucleotide sequencing of a Staphylococcus aureus gene encoding a branched-chain-amino-acid transporter.</title>
        <authorList>
            <person name="Vijaranakul U."/>
            <person name="Xiong A."/>
            <person name="Lockwood K."/>
            <person name="Jayaswal R.K."/>
        </authorList>
    </citation>
    <scope>NUCLEOTIDE SEQUENCE [GENOMIC DNA]</scope>
    <scope>NACL SENSITIVE PHENOTYPE</scope>
</reference>
<reference key="2">
    <citation type="book" date="2006" name="Gram positive pathogens, 2nd edition">
        <title>The Staphylococcus aureus NCTC 8325 genome.</title>
        <editorList>
            <person name="Fischetti V."/>
            <person name="Novick R."/>
            <person name="Ferretti J."/>
            <person name="Portnoy D."/>
            <person name="Rood J."/>
        </editorList>
        <authorList>
            <person name="Gillaspy A.F."/>
            <person name="Worrell V."/>
            <person name="Orvis J."/>
            <person name="Roe B.A."/>
            <person name="Dyer D.W."/>
            <person name="Iandolo J.J."/>
        </authorList>
    </citation>
    <scope>NUCLEOTIDE SEQUENCE [LARGE SCALE GENOMIC DNA]</scope>
    <source>
        <strain>NCTC 8325 / PS 47</strain>
    </source>
</reference>
<reference key="3">
    <citation type="journal article" date="2005" name="Infect. Immun.">
        <title>Staphylococcus aureus virulence factors identified by using a high-throughput Caenorhabditis elegans-killing model.</title>
        <authorList>
            <person name="Begun J."/>
            <person name="Sifri C.D."/>
            <person name="Goldman S."/>
            <person name="Calderwood S.B."/>
            <person name="Ausubel F.M."/>
        </authorList>
    </citation>
    <scope>VIRULENCE STUDIES</scope>
</reference>